<reference key="1">
    <citation type="journal article" date="1985" name="Eur. J. Biochem.">
        <title>Nucleotide sequences of the cDNA and an intronless pseudogene for human lactate dehydrogenase-A isozyme.</title>
        <authorList>
            <person name="Tsujibo H."/>
            <person name="Tiano H.F."/>
            <person name="Li S.S.-L."/>
        </authorList>
    </citation>
    <scope>NUCLEOTIDE SEQUENCE [MRNA] (ISOFORM 1)</scope>
</reference>
<reference key="2">
    <citation type="journal article" date="1985" name="Biochem. J.">
        <title>Genomic organization of human lactate dehydrogenase-A gene.</title>
        <authorList>
            <person name="Chung F.Z."/>
            <person name="Tsujibo H."/>
            <person name="Bhattacharyya U."/>
            <person name="Sharief F.S."/>
            <person name="Li S.S.-L."/>
        </authorList>
    </citation>
    <scope>NUCLEOTIDE SEQUENCE [GENOMIC DNA] (ISOFORM 1)</scope>
</reference>
<reference key="3">
    <citation type="submission" date="2003-09" db="EMBL/GenBank/DDBJ databases">
        <title>Identification of a human proliferation-inducing gene.</title>
        <authorList>
            <person name="Kim J.W."/>
        </authorList>
    </citation>
    <scope>NUCLEOTIDE SEQUENCE [LARGE SCALE MRNA] (ISOFORM 1)</scope>
</reference>
<reference key="4">
    <citation type="journal article" date="2004" name="Nat. Genet.">
        <title>Complete sequencing and characterization of 21,243 full-length human cDNAs.</title>
        <authorList>
            <person name="Ota T."/>
            <person name="Suzuki Y."/>
            <person name="Nishikawa T."/>
            <person name="Otsuki T."/>
            <person name="Sugiyama T."/>
            <person name="Irie R."/>
            <person name="Wakamatsu A."/>
            <person name="Hayashi K."/>
            <person name="Sato H."/>
            <person name="Nagai K."/>
            <person name="Kimura K."/>
            <person name="Makita H."/>
            <person name="Sekine M."/>
            <person name="Obayashi M."/>
            <person name="Nishi T."/>
            <person name="Shibahara T."/>
            <person name="Tanaka T."/>
            <person name="Ishii S."/>
            <person name="Yamamoto J."/>
            <person name="Saito K."/>
            <person name="Kawai Y."/>
            <person name="Isono Y."/>
            <person name="Nakamura Y."/>
            <person name="Nagahari K."/>
            <person name="Murakami K."/>
            <person name="Yasuda T."/>
            <person name="Iwayanagi T."/>
            <person name="Wagatsuma M."/>
            <person name="Shiratori A."/>
            <person name="Sudo H."/>
            <person name="Hosoiri T."/>
            <person name="Kaku Y."/>
            <person name="Kodaira H."/>
            <person name="Kondo H."/>
            <person name="Sugawara M."/>
            <person name="Takahashi M."/>
            <person name="Kanda K."/>
            <person name="Yokoi T."/>
            <person name="Furuya T."/>
            <person name="Kikkawa E."/>
            <person name="Omura Y."/>
            <person name="Abe K."/>
            <person name="Kamihara K."/>
            <person name="Katsuta N."/>
            <person name="Sato K."/>
            <person name="Tanikawa M."/>
            <person name="Yamazaki M."/>
            <person name="Ninomiya K."/>
            <person name="Ishibashi T."/>
            <person name="Yamashita H."/>
            <person name="Murakawa K."/>
            <person name="Fujimori K."/>
            <person name="Tanai H."/>
            <person name="Kimata M."/>
            <person name="Watanabe M."/>
            <person name="Hiraoka S."/>
            <person name="Chiba Y."/>
            <person name="Ishida S."/>
            <person name="Ono Y."/>
            <person name="Takiguchi S."/>
            <person name="Watanabe S."/>
            <person name="Yosida M."/>
            <person name="Hotuta T."/>
            <person name="Kusano J."/>
            <person name="Kanehori K."/>
            <person name="Takahashi-Fujii A."/>
            <person name="Hara H."/>
            <person name="Tanase T.-O."/>
            <person name="Nomura Y."/>
            <person name="Togiya S."/>
            <person name="Komai F."/>
            <person name="Hara R."/>
            <person name="Takeuchi K."/>
            <person name="Arita M."/>
            <person name="Imose N."/>
            <person name="Musashino K."/>
            <person name="Yuuki H."/>
            <person name="Oshima A."/>
            <person name="Sasaki N."/>
            <person name="Aotsuka S."/>
            <person name="Yoshikawa Y."/>
            <person name="Matsunawa H."/>
            <person name="Ichihara T."/>
            <person name="Shiohata N."/>
            <person name="Sano S."/>
            <person name="Moriya S."/>
            <person name="Momiyama H."/>
            <person name="Satoh N."/>
            <person name="Takami S."/>
            <person name="Terashima Y."/>
            <person name="Suzuki O."/>
            <person name="Nakagawa S."/>
            <person name="Senoh A."/>
            <person name="Mizoguchi H."/>
            <person name="Goto Y."/>
            <person name="Shimizu F."/>
            <person name="Wakebe H."/>
            <person name="Hishigaki H."/>
            <person name="Watanabe T."/>
            <person name="Sugiyama A."/>
            <person name="Takemoto M."/>
            <person name="Kawakami B."/>
            <person name="Yamazaki M."/>
            <person name="Watanabe K."/>
            <person name="Kumagai A."/>
            <person name="Itakura S."/>
            <person name="Fukuzumi Y."/>
            <person name="Fujimori Y."/>
            <person name="Komiyama M."/>
            <person name="Tashiro H."/>
            <person name="Tanigami A."/>
            <person name="Fujiwara T."/>
            <person name="Ono T."/>
            <person name="Yamada K."/>
            <person name="Fujii Y."/>
            <person name="Ozaki K."/>
            <person name="Hirao M."/>
            <person name="Ohmori Y."/>
            <person name="Kawabata A."/>
            <person name="Hikiji T."/>
            <person name="Kobatake N."/>
            <person name="Inagaki H."/>
            <person name="Ikema Y."/>
            <person name="Okamoto S."/>
            <person name="Okitani R."/>
            <person name="Kawakami T."/>
            <person name="Noguchi S."/>
            <person name="Itoh T."/>
            <person name="Shigeta K."/>
            <person name="Senba T."/>
            <person name="Matsumura K."/>
            <person name="Nakajima Y."/>
            <person name="Mizuno T."/>
            <person name="Morinaga M."/>
            <person name="Sasaki M."/>
            <person name="Togashi T."/>
            <person name="Oyama M."/>
            <person name="Hata H."/>
            <person name="Watanabe M."/>
            <person name="Komatsu T."/>
            <person name="Mizushima-Sugano J."/>
            <person name="Satoh T."/>
            <person name="Shirai Y."/>
            <person name="Takahashi Y."/>
            <person name="Nakagawa K."/>
            <person name="Okumura K."/>
            <person name="Nagase T."/>
            <person name="Nomura N."/>
            <person name="Kikuchi H."/>
            <person name="Masuho Y."/>
            <person name="Yamashita R."/>
            <person name="Nakai K."/>
            <person name="Yada T."/>
            <person name="Nakamura Y."/>
            <person name="Ohara O."/>
            <person name="Isogai T."/>
            <person name="Sugano S."/>
        </authorList>
    </citation>
    <scope>NUCLEOTIDE SEQUENCE [LARGE SCALE MRNA] (ISOFORMS 2; 3 AND 4)</scope>
    <source>
        <tissue>Umbilical cord</tissue>
    </source>
</reference>
<reference key="5">
    <citation type="submission" date="2004-06" db="EMBL/GenBank/DDBJ databases">
        <title>Cloning of human full open reading frames in Gateway(TM) system entry vector (pDONR201).</title>
        <authorList>
            <person name="Halleck A."/>
            <person name="Ebert L."/>
            <person name="Mkoundinya M."/>
            <person name="Schick M."/>
            <person name="Eisenstein S."/>
            <person name="Neubert P."/>
            <person name="Kstrang K."/>
            <person name="Schatten R."/>
            <person name="Shen B."/>
            <person name="Henze S."/>
            <person name="Mar W."/>
            <person name="Korn B."/>
            <person name="Zuo D."/>
            <person name="Hu Y."/>
            <person name="LaBaer J."/>
        </authorList>
    </citation>
    <scope>NUCLEOTIDE SEQUENCE [LARGE SCALE MRNA] (ISOFORM 1)</scope>
</reference>
<reference key="6">
    <citation type="submission" date="2005-04" db="EMBL/GenBank/DDBJ databases">
        <authorList>
            <person name="Suzuki Y."/>
            <person name="Sugano S."/>
            <person name="Totoki Y."/>
            <person name="Toyoda A."/>
            <person name="Takeda T."/>
            <person name="Sakaki Y."/>
            <person name="Tanaka A."/>
            <person name="Yokoyama S."/>
        </authorList>
    </citation>
    <scope>NUCLEOTIDE SEQUENCE [LARGE SCALE MRNA] (ISOFORM 1)</scope>
    <scope>VARIANT GLU-222</scope>
    <source>
        <tissue>Gastric carcinoma</tissue>
    </source>
</reference>
<reference key="7">
    <citation type="journal article" date="2006" name="Nature">
        <title>Human chromosome 11 DNA sequence and analysis including novel gene identification.</title>
        <authorList>
            <person name="Taylor T.D."/>
            <person name="Noguchi H."/>
            <person name="Totoki Y."/>
            <person name="Toyoda A."/>
            <person name="Kuroki Y."/>
            <person name="Dewar K."/>
            <person name="Lloyd C."/>
            <person name="Itoh T."/>
            <person name="Takeda T."/>
            <person name="Kim D.-W."/>
            <person name="She X."/>
            <person name="Barlow K.F."/>
            <person name="Bloom T."/>
            <person name="Bruford E."/>
            <person name="Chang J.L."/>
            <person name="Cuomo C.A."/>
            <person name="Eichler E."/>
            <person name="FitzGerald M.G."/>
            <person name="Jaffe D.B."/>
            <person name="LaButti K."/>
            <person name="Nicol R."/>
            <person name="Park H.-S."/>
            <person name="Seaman C."/>
            <person name="Sougnez C."/>
            <person name="Yang X."/>
            <person name="Zimmer A.R."/>
            <person name="Zody M.C."/>
            <person name="Birren B.W."/>
            <person name="Nusbaum C."/>
            <person name="Fujiyama A."/>
            <person name="Hattori M."/>
            <person name="Rogers J."/>
            <person name="Lander E.S."/>
            <person name="Sakaki Y."/>
        </authorList>
    </citation>
    <scope>NUCLEOTIDE SEQUENCE [LARGE SCALE GENOMIC DNA]</scope>
</reference>
<reference key="8">
    <citation type="submission" date="2005-09" db="EMBL/GenBank/DDBJ databases">
        <authorList>
            <person name="Mural R.J."/>
            <person name="Istrail S."/>
            <person name="Sutton G.G."/>
            <person name="Florea L."/>
            <person name="Halpern A.L."/>
            <person name="Mobarry C.M."/>
            <person name="Lippert R."/>
            <person name="Walenz B."/>
            <person name="Shatkay H."/>
            <person name="Dew I."/>
            <person name="Miller J.R."/>
            <person name="Flanigan M.J."/>
            <person name="Edwards N.J."/>
            <person name="Bolanos R."/>
            <person name="Fasulo D."/>
            <person name="Halldorsson B.V."/>
            <person name="Hannenhalli S."/>
            <person name="Turner R."/>
            <person name="Yooseph S."/>
            <person name="Lu F."/>
            <person name="Nusskern D.R."/>
            <person name="Shue B.C."/>
            <person name="Zheng X.H."/>
            <person name="Zhong F."/>
            <person name="Delcher A.L."/>
            <person name="Huson D.H."/>
            <person name="Kravitz S.A."/>
            <person name="Mouchard L."/>
            <person name="Reinert K."/>
            <person name="Remington K.A."/>
            <person name="Clark A.G."/>
            <person name="Waterman M.S."/>
            <person name="Eichler E.E."/>
            <person name="Adams M.D."/>
            <person name="Hunkapiller M.W."/>
            <person name="Myers E.W."/>
            <person name="Venter J.C."/>
        </authorList>
    </citation>
    <scope>NUCLEOTIDE SEQUENCE [LARGE SCALE GENOMIC DNA]</scope>
</reference>
<reference key="9">
    <citation type="journal article" date="2004" name="Genome Res.">
        <title>The status, quality, and expansion of the NIH full-length cDNA project: the Mammalian Gene Collection (MGC).</title>
        <authorList>
            <consortium name="The MGC Project Team"/>
        </authorList>
    </citation>
    <scope>NUCLEOTIDE SEQUENCE [LARGE SCALE MRNA] (ISOFORM 1)</scope>
    <source>
        <tissue>Bone marrow</tissue>
    </source>
</reference>
<reference key="10">
    <citation type="submission" date="2005-03" db="UniProtKB">
        <authorList>
            <person name="Bienvenut W.V."/>
        </authorList>
    </citation>
    <scope>PROTEIN SEQUENCE OF 2-14; 43-57; 60-73; 77-112; 133-149; 158-169; 233-243; 306-315 AND 319-328</scope>
    <scope>CLEAVAGE OF INITIATOR METHIONINE</scope>
    <scope>ACETYLATION AT ALA-2</scope>
    <scope>IDENTIFICATION BY MASS SPECTROMETRY</scope>
    <source>
        <tissue>B-cell lymphoma</tissue>
    </source>
</reference>
<reference key="11">
    <citation type="journal article" date="1991" name="Biochem. Biophys. Res. Commun.">
        <title>Analysis of genetic mutations in human lactate dehydrogenase-A(M) deficiency using DNA conformation polymorphism in combination with polyacrylamide gradient gel and silver staining.</title>
        <authorList>
            <person name="Maekawa M."/>
            <person name="Sudo K."/>
            <person name="Li S.S."/>
            <person name="Kanno T."/>
        </authorList>
    </citation>
    <scope>NUCLEOTIDE SEQUENCE [GENOMIC DNA] OF 112-121 AND 160-175</scope>
</reference>
<reference key="12">
    <citation type="journal article" date="1991" name="Hum. Genet.">
        <title>Genotypic analysis of families with lactate dehydrogenase A (M) deficiency by selective DNA amplification.</title>
        <authorList>
            <person name="Maekawa M."/>
            <person name="Sudo K."/>
            <person name="Li S.S."/>
            <person name="Kanno T."/>
        </authorList>
    </citation>
    <scope>NUCLEOTIDE SEQUENCE [GENOMIC DNA] OF 250-254</scope>
</reference>
<reference key="13">
    <citation type="journal article" date="1990" name="Biochem. Biophys. Res. Commun.">
        <title>Molecular characterization of genetic mutation in human lactate dehydrogenase-A (M) deficiency.</title>
        <authorList>
            <person name="Maekawa M."/>
            <person name="Sudo K."/>
            <person name="Kanno T."/>
            <person name="Li S.S."/>
        </authorList>
    </citation>
    <scope>INVOLVEMENT IN GSD11</scope>
</reference>
<reference key="14">
    <citation type="journal article" date="1999" name="Int. J. Cancer">
        <title>Antigens recognized by autologous antibody in patients with renal-cell carcinoma.</title>
        <authorList>
            <person name="Scanlan M.J."/>
            <person name="Gordan J.D."/>
            <person name="Williamson B."/>
            <person name="Stockert E."/>
            <person name="Bander N.H."/>
            <person name="Jongeneel C.V."/>
            <person name="Gure A.O."/>
            <person name="Jaeger D."/>
            <person name="Jaeger E."/>
            <person name="Knuth A."/>
            <person name="Chen Y.-T."/>
            <person name="Old L.J."/>
        </authorList>
    </citation>
    <scope>IDENTIFICATION AS A RENAL CANCER ANTIGEN</scope>
    <source>
        <tissue>Renal cell carcinoma</tissue>
    </source>
</reference>
<reference key="15">
    <citation type="journal article" date="2003" name="Nature">
        <title>Proteomic characterization of the human centrosome by protein correlation profiling.</title>
        <authorList>
            <person name="Andersen J.S."/>
            <person name="Wilkinson C.J."/>
            <person name="Mayor T."/>
            <person name="Mortensen P."/>
            <person name="Nigg E.A."/>
            <person name="Mann M."/>
        </authorList>
    </citation>
    <scope>IDENTIFICATION BY MASS SPECTROMETRY</scope>
    <source>
        <tissue>Lymphoblast</tissue>
    </source>
</reference>
<reference key="16">
    <citation type="journal article" date="2005" name="Biochem. Biophys. Res. Commun.">
        <title>Proteomic identification of proteins conjugated to ISG15 in mouse and human cells.</title>
        <authorList>
            <person name="Giannakopoulos N.V."/>
            <person name="Luo J.K."/>
            <person name="Papov V."/>
            <person name="Zou W."/>
            <person name="Lenschow D.J."/>
            <person name="Jacobs B.S."/>
            <person name="Borden E.C."/>
            <person name="Li J."/>
            <person name="Virgin H.W."/>
            <person name="Zhang D.E."/>
        </authorList>
    </citation>
    <scope>ISGYLATION</scope>
</reference>
<reference key="17">
    <citation type="journal article" date="2005" name="Nat. Biotechnol.">
        <title>Immunoaffinity profiling of tyrosine phosphorylation in cancer cells.</title>
        <authorList>
            <person name="Rush J."/>
            <person name="Moritz A."/>
            <person name="Lee K.A."/>
            <person name="Guo A."/>
            <person name="Goss V.L."/>
            <person name="Spek E.J."/>
            <person name="Zhang H."/>
            <person name="Zha X.-M."/>
            <person name="Polakiewicz R.D."/>
            <person name="Comb M.J."/>
        </authorList>
    </citation>
    <scope>IDENTIFICATION BY MASS SPECTROMETRY [LARGE SCALE ANALYSIS]</scope>
</reference>
<reference key="18">
    <citation type="journal article" date="2009" name="Anal. Chem.">
        <title>Lys-N and trypsin cover complementary parts of the phosphoproteome in a refined SCX-based approach.</title>
        <authorList>
            <person name="Gauci S."/>
            <person name="Helbig A.O."/>
            <person name="Slijper M."/>
            <person name="Krijgsveld J."/>
            <person name="Heck A.J."/>
            <person name="Mohammed S."/>
        </authorList>
    </citation>
    <scope>ACETYLATION [LARGE SCALE ANALYSIS] AT ALA-2</scope>
    <scope>CLEAVAGE OF INITIATOR METHIONINE [LARGE SCALE ANALYSIS]</scope>
    <scope>IDENTIFICATION BY MASS SPECTROMETRY [LARGE SCALE ANALYSIS]</scope>
</reference>
<reference key="19">
    <citation type="journal article" date="2009" name="Sci. Signal.">
        <title>Quantitative phosphoproteomic analysis of T cell receptor signaling reveals system-wide modulation of protein-protein interactions.</title>
        <authorList>
            <person name="Mayya V."/>
            <person name="Lundgren D.H."/>
            <person name="Hwang S.-I."/>
            <person name="Rezaul K."/>
            <person name="Wu L."/>
            <person name="Eng J.K."/>
            <person name="Rodionov V."/>
            <person name="Han D.K."/>
        </authorList>
    </citation>
    <scope>PHOSPHORYLATION [LARGE SCALE ANALYSIS] AT TYR-10</scope>
    <scope>IDENTIFICATION BY MASS SPECTROMETRY [LARGE SCALE ANALYSIS]</scope>
    <source>
        <tissue>Leukemic T-cell</tissue>
    </source>
</reference>
<reference key="20">
    <citation type="journal article" date="2009" name="Science">
        <title>Lysine acetylation targets protein complexes and co-regulates major cellular functions.</title>
        <authorList>
            <person name="Choudhary C."/>
            <person name="Kumar C."/>
            <person name="Gnad F."/>
            <person name="Nielsen M.L."/>
            <person name="Rehman M."/>
            <person name="Walther T.C."/>
            <person name="Olsen J.V."/>
            <person name="Mann M."/>
        </authorList>
    </citation>
    <scope>ACETYLATION [LARGE SCALE ANALYSIS] AT LYS-5; LYS-14; LYS-57; LYS-81; LYS-118; LYS-126 AND LYS-318</scope>
    <scope>IDENTIFICATION BY MASS SPECTROMETRY [LARGE SCALE ANALYSIS]</scope>
</reference>
<reference key="21">
    <citation type="journal article" date="2011" name="BMC Syst. Biol.">
        <title>Initial characterization of the human central proteome.</title>
        <authorList>
            <person name="Burkard T.R."/>
            <person name="Planyavsky M."/>
            <person name="Kaupe I."/>
            <person name="Breitwieser F.P."/>
            <person name="Buerckstuemmer T."/>
            <person name="Bennett K.L."/>
            <person name="Superti-Furga G."/>
            <person name="Colinge J."/>
        </authorList>
    </citation>
    <scope>IDENTIFICATION BY MASS SPECTROMETRY [LARGE SCALE ANALYSIS]</scope>
</reference>
<reference key="22">
    <citation type="journal article" date="2012" name="J. Proteome Res.">
        <title>Resveratrol-induced changes of the human adipocyte secretion profile.</title>
        <authorList>
            <person name="Rosenow A."/>
            <person name="Noben J.P."/>
            <person name="Jocken J."/>
            <person name="Kallendrusch S."/>
            <person name="Fischer-Posovszky P."/>
            <person name="Mariman E.C."/>
            <person name="Renes J."/>
        </authorList>
    </citation>
    <scope>IDENTIFICATION BY MASS SPECTROMETRY [LARGE SCALE ANALYSIS]</scope>
</reference>
<reference key="23">
    <citation type="journal article" date="2012" name="Mol. Cell. Proteomics">
        <title>Comparative large-scale characterisation of plant vs. mammal proteins reveals similar and idiosyncratic N-alpha acetylation features.</title>
        <authorList>
            <person name="Bienvenut W.V."/>
            <person name="Sumpton D."/>
            <person name="Martinez A."/>
            <person name="Lilla S."/>
            <person name="Espagne C."/>
            <person name="Meinnel T."/>
            <person name="Giglione C."/>
        </authorList>
    </citation>
    <scope>ACETYLATION [LARGE SCALE ANALYSIS] AT ALA-2</scope>
    <scope>CLEAVAGE OF INITIATOR METHIONINE [LARGE SCALE ANALYSIS]</scope>
    <scope>IDENTIFICATION BY MASS SPECTROMETRY [LARGE SCALE ANALYSIS]</scope>
</reference>
<reference key="24">
    <citation type="journal article" date="2013" name="J. Proteome Res.">
        <title>Toward a comprehensive characterization of a human cancer cell phosphoproteome.</title>
        <authorList>
            <person name="Zhou H."/>
            <person name="Di Palma S."/>
            <person name="Preisinger C."/>
            <person name="Peng M."/>
            <person name="Polat A.N."/>
            <person name="Heck A.J."/>
            <person name="Mohammed S."/>
        </authorList>
    </citation>
    <scope>PHOSPHORYLATION [LARGE SCALE ANALYSIS] AT THR-18 AND SER-310</scope>
    <scope>IDENTIFICATION BY MASS SPECTROMETRY [LARGE SCALE ANALYSIS]</scope>
    <source>
        <tissue>Cervix carcinoma</tissue>
        <tissue>Erythroleukemia</tissue>
    </source>
</reference>
<reference key="25">
    <citation type="journal article" date="2014" name="J. Proteomics">
        <title>An enzyme assisted RP-RPLC approach for in-depth analysis of human liver phosphoproteome.</title>
        <authorList>
            <person name="Bian Y."/>
            <person name="Song C."/>
            <person name="Cheng K."/>
            <person name="Dong M."/>
            <person name="Wang F."/>
            <person name="Huang J."/>
            <person name="Sun D."/>
            <person name="Wang L."/>
            <person name="Ye M."/>
            <person name="Zou H."/>
        </authorList>
    </citation>
    <scope>PHOSPHORYLATION [LARGE SCALE ANALYSIS] AT SER-310</scope>
    <scope>IDENTIFICATION BY MASS SPECTROMETRY [LARGE SCALE ANALYSIS]</scope>
    <source>
        <tissue>Liver</tissue>
    </source>
</reference>
<reference key="26">
    <citation type="journal article" date="2015" name="Proteomics">
        <title>N-terminome analysis of the human mitochondrial proteome.</title>
        <authorList>
            <person name="Vaca Jacome A.S."/>
            <person name="Rabilloud T."/>
            <person name="Schaeffer-Reiss C."/>
            <person name="Rompais M."/>
            <person name="Ayoub D."/>
            <person name="Lane L."/>
            <person name="Bairoch A."/>
            <person name="Van Dorsselaer A."/>
            <person name="Carapito C."/>
        </authorList>
    </citation>
    <scope>IDENTIFICATION BY MASS SPECTROMETRY [LARGE SCALE ANALYSIS]</scope>
</reference>
<reference key="27">
    <citation type="journal article" date="2017" name="Nat. Struct. Mol. Biol.">
        <title>Site-specific mapping of the human SUMO proteome reveals co-modification with phosphorylation.</title>
        <authorList>
            <person name="Hendriks I.A."/>
            <person name="Lyon D."/>
            <person name="Young C."/>
            <person name="Jensen L.J."/>
            <person name="Vertegaal A.C."/>
            <person name="Nielsen M.L."/>
        </authorList>
    </citation>
    <scope>SUMOYLATION [LARGE SCALE ANALYSIS] AT LYS-57</scope>
    <scope>IDENTIFICATION BY MASS SPECTROMETRY [LARGE SCALE ANALYSIS]</scope>
</reference>
<reference key="28">
    <citation type="journal article" date="2021" name="Cell Metab.">
        <title>An Upstream Open Reading Frame in Phosphatase and Tensin Homolog Encodes a Circuit Breaker of Lactate Metabolism.</title>
        <authorList>
            <person name="Huang N."/>
            <person name="Li F."/>
            <person name="Zhang M."/>
            <person name="Zhou H."/>
            <person name="Chen Z."/>
            <person name="Ma X."/>
            <person name="Yang L."/>
            <person name="Wu X."/>
            <person name="Zhong J."/>
            <person name="Xiao F."/>
            <person name="Yang X."/>
            <person name="Zhao K."/>
            <person name="Li X."/>
            <person name="Xia X."/>
            <person name="Liu Z."/>
            <person name="Gao S."/>
            <person name="Zhang N."/>
        </authorList>
    </citation>
    <scope>INTERACTION WITH MP31</scope>
    <scope>MUTAGENESIS OF ASP-56 AND ARG-99</scope>
</reference>
<reference key="29">
    <citation type="journal article" date="2021" name="Cell Metab.">
        <authorList>
            <person name="Huang N."/>
            <person name="Li F."/>
            <person name="Zhang M."/>
            <person name="Zhou H."/>
            <person name="Chen Z."/>
            <person name="Ma X."/>
            <person name="Yang L."/>
            <person name="Wu X."/>
            <person name="Zhong J."/>
            <person name="Xiao F."/>
            <person name="Yang X."/>
            <person name="Zhao K."/>
            <person name="Li X."/>
            <person name="Xia X."/>
            <person name="Liu Z."/>
            <person name="Gao S."/>
            <person name="Zhang N."/>
        </authorList>
    </citation>
    <scope>ERRATUM OF PUBMED:33406399</scope>
</reference>
<reference key="30">
    <citation type="journal article" date="2021" name="Nat. Struct. Mol. Biol.">
        <title>The tumor suppressor folliculin inhibits lactate dehydrogenase A and regulates the Warburg effect.</title>
        <authorList>
            <person name="Woodford M.R."/>
            <person name="Baker-Williams A.J."/>
            <person name="Sager R.A."/>
            <person name="Backe S.J."/>
            <person name="Blanden A.R."/>
            <person name="Hashmi F."/>
            <person name="Kancherla P."/>
            <person name="Gori A."/>
            <person name="Loiselle D.R."/>
            <person name="Castelli M."/>
            <person name="Serapian S.A."/>
            <person name="Colombo G."/>
            <person name="Haystead T.A."/>
            <person name="Jensen S.M."/>
            <person name="Stetler-Stevenson W.G."/>
            <person name="Loh S.N."/>
            <person name="Schmidt L.S."/>
            <person name="Linehan W.M."/>
            <person name="Bah A."/>
            <person name="Bourboulia D."/>
            <person name="Bratslavsky G."/>
            <person name="Mollapour M."/>
        </authorList>
    </citation>
    <scope>ACTIVITY REGULATION</scope>
    <scope>INTERACTION WITH FLCN</scope>
    <scope>MUTAGENESIS OF ARG-106</scope>
</reference>
<reference key="31">
    <citation type="journal article" date="2001" name="Proteins">
        <title>Structural basis for altered activity of M- and H-isozyme forms of human lactate dehydrogenase.</title>
        <authorList>
            <person name="Read J.A."/>
            <person name="Winter V.J."/>
            <person name="Eszes C.M."/>
            <person name="Sessions R.B."/>
            <person name="Brady R.L."/>
        </authorList>
    </citation>
    <scope>X-RAY CRYSTALLOGRAPHY (2.3 ANGSTROMS) IN COMPLEX WITH NADH AND SUBSTRATE ANALOG</scope>
    <scope>HOMOTETRAMERIZATION</scope>
    <scope>CATALYTIC ACTIVITY</scope>
    <scope>FUNCTION</scope>
</reference>
<reference key="32">
    <citation type="journal article" date="1992" name="Biochem. Int.">
        <title>Molecular analysis of genetic mutation in electrophoretic variant of human lactate dehydrogenase-A(M) subunit.</title>
        <authorList>
            <person name="Sudo K."/>
            <person name="Maekawa M."/>
            <person name="Shioya M."/>
            <person name="Ikeda K."/>
            <person name="Takahashi N."/>
            <person name="Isogai Y."/>
            <person name="Li S.S.-L."/>
            <person name="Kanno T."/>
            <person name="Machida K."/>
            <person name="Toriumi J."/>
        </authorList>
    </citation>
    <scope>VARIANT CYS-315</scope>
</reference>
<reference key="33">
    <citation type="journal article" date="1994" name="Clin. Chem.">
        <title>Fast-type electrophoretic variant of lactate dehydrogenase M(A) and comparison with other missense mutations in lactate dehydrogenase M(A) and H(B) genes.</title>
        <authorList>
            <person name="Maekawa M."/>
            <person name="Sudo K."/>
            <person name="Kobayashi A."/>
            <person name="Sugiyama E."/>
            <person name="Li S.S.-L."/>
            <person name="Kanno T."/>
        </authorList>
    </citation>
    <scope>VARIANT GLU-222</scope>
</reference>
<name>LDHA_HUMAN</name>
<dbReference type="EC" id="1.1.1.27" evidence="3"/>
<dbReference type="EMBL" id="X02152">
    <property type="protein sequence ID" value="CAA26088.1"/>
    <property type="molecule type" value="mRNA"/>
</dbReference>
<dbReference type="EMBL" id="X03077">
    <property type="protein sequence ID" value="CAA26879.1"/>
    <property type="molecule type" value="Genomic_DNA"/>
</dbReference>
<dbReference type="EMBL" id="X03078">
    <property type="protein sequence ID" value="CAA26879.1"/>
    <property type="status" value="JOINED"/>
    <property type="molecule type" value="Genomic_DNA"/>
</dbReference>
<dbReference type="EMBL" id="X03079">
    <property type="protein sequence ID" value="CAA26879.1"/>
    <property type="status" value="JOINED"/>
    <property type="molecule type" value="Genomic_DNA"/>
</dbReference>
<dbReference type="EMBL" id="X03080">
    <property type="protein sequence ID" value="CAA26879.1"/>
    <property type="status" value="JOINED"/>
    <property type="molecule type" value="Genomic_DNA"/>
</dbReference>
<dbReference type="EMBL" id="X03081">
    <property type="protein sequence ID" value="CAA26879.1"/>
    <property type="status" value="JOINED"/>
    <property type="molecule type" value="Genomic_DNA"/>
</dbReference>
<dbReference type="EMBL" id="X03082">
    <property type="protein sequence ID" value="CAA26879.1"/>
    <property type="status" value="JOINED"/>
    <property type="molecule type" value="Genomic_DNA"/>
</dbReference>
<dbReference type="EMBL" id="X03083">
    <property type="protein sequence ID" value="CAA26879.1"/>
    <property type="status" value="JOINED"/>
    <property type="molecule type" value="Genomic_DNA"/>
</dbReference>
<dbReference type="EMBL" id="AY423727">
    <property type="protein sequence ID" value="AAS00490.1"/>
    <property type="molecule type" value="mRNA"/>
</dbReference>
<dbReference type="EMBL" id="AK130587">
    <property type="protein sequence ID" value="BAC85389.1"/>
    <property type="molecule type" value="mRNA"/>
</dbReference>
<dbReference type="EMBL" id="AK296667">
    <property type="protein sequence ID" value="BAG59264.1"/>
    <property type="molecule type" value="mRNA"/>
</dbReference>
<dbReference type="EMBL" id="AK298834">
    <property type="protein sequence ID" value="BAH12879.1"/>
    <property type="molecule type" value="mRNA"/>
</dbReference>
<dbReference type="EMBL" id="CR456775">
    <property type="protein sequence ID" value="CAG33056.1"/>
    <property type="molecule type" value="mRNA"/>
</dbReference>
<dbReference type="EMBL" id="CR541714">
    <property type="protein sequence ID" value="CAG46515.1"/>
    <property type="molecule type" value="mRNA"/>
</dbReference>
<dbReference type="EMBL" id="AK223078">
    <property type="protein sequence ID" value="BAD96798.1"/>
    <property type="molecule type" value="mRNA"/>
</dbReference>
<dbReference type="EMBL" id="AC084117">
    <property type="status" value="NOT_ANNOTATED_CDS"/>
    <property type="molecule type" value="Genomic_DNA"/>
</dbReference>
<dbReference type="EMBL" id="CH471064">
    <property type="protein sequence ID" value="EAW68395.1"/>
    <property type="molecule type" value="Genomic_DNA"/>
</dbReference>
<dbReference type="EMBL" id="CH471064">
    <property type="protein sequence ID" value="EAW68396.1"/>
    <property type="molecule type" value="Genomic_DNA"/>
</dbReference>
<dbReference type="EMBL" id="BC067223">
    <property type="protein sequence ID" value="AAH67223.1"/>
    <property type="molecule type" value="mRNA"/>
</dbReference>
<dbReference type="EMBL" id="S66853">
    <property type="protein sequence ID" value="AAB20418.1"/>
    <property type="molecule type" value="Genomic_DNA"/>
</dbReference>
<dbReference type="CCDS" id="CCDS44549.1">
    <molecule id="P00338-4"/>
</dbReference>
<dbReference type="CCDS" id="CCDS53609.1">
    <molecule id="P00338-3"/>
</dbReference>
<dbReference type="CCDS" id="CCDS53610.1">
    <molecule id="P00338-2"/>
</dbReference>
<dbReference type="CCDS" id="CCDS53611.1">
    <molecule id="P00338-5"/>
</dbReference>
<dbReference type="CCDS" id="CCDS7839.1">
    <molecule id="P00338-1"/>
</dbReference>
<dbReference type="PIR" id="A00347">
    <property type="entry name" value="DEHULM"/>
</dbReference>
<dbReference type="RefSeq" id="NP_001128711.1">
    <molecule id="P00338-4"/>
    <property type="nucleotide sequence ID" value="NM_001135239.2"/>
</dbReference>
<dbReference type="RefSeq" id="NP_001158886.1">
    <molecule id="P00338-3"/>
    <property type="nucleotide sequence ID" value="NM_001165414.2"/>
</dbReference>
<dbReference type="RefSeq" id="NP_001158887.1">
    <molecule id="P00338-2"/>
    <property type="nucleotide sequence ID" value="NM_001165415.2"/>
</dbReference>
<dbReference type="RefSeq" id="NP_001158888.1">
    <molecule id="P00338-5"/>
    <property type="nucleotide sequence ID" value="NM_001165416.2"/>
</dbReference>
<dbReference type="RefSeq" id="NP_005557.1">
    <molecule id="P00338-1"/>
    <property type="nucleotide sequence ID" value="NM_005566.4"/>
</dbReference>
<dbReference type="PDB" id="1I10">
    <property type="method" value="X-ray"/>
    <property type="resolution" value="2.30 A"/>
    <property type="chains" value="A/B/C/D/E/F/G/H=2-332"/>
</dbReference>
<dbReference type="PDB" id="4AJP">
    <property type="method" value="X-ray"/>
    <property type="resolution" value="2.38 A"/>
    <property type="chains" value="A/B/C/D=2-332"/>
</dbReference>
<dbReference type="PDB" id="4JNK">
    <property type="method" value="X-ray"/>
    <property type="resolution" value="1.90 A"/>
    <property type="chains" value="A/B/C/D=2-332"/>
</dbReference>
<dbReference type="PDB" id="4L4R">
    <property type="method" value="X-ray"/>
    <property type="resolution" value="2.10 A"/>
    <property type="chains" value="A/H=2-332"/>
</dbReference>
<dbReference type="PDB" id="4L4S">
    <property type="method" value="X-ray"/>
    <property type="resolution" value="2.90 A"/>
    <property type="chains" value="A/H=2-332"/>
</dbReference>
<dbReference type="PDB" id="4M49">
    <property type="method" value="X-ray"/>
    <property type="resolution" value="2.05 A"/>
    <property type="chains" value="A/B/C/D=2-332"/>
</dbReference>
<dbReference type="PDB" id="4OJN">
    <property type="method" value="X-ray"/>
    <property type="resolution" value="2.40 A"/>
    <property type="chains" value="A/B/C/D/E/F/G/H=2-332"/>
</dbReference>
<dbReference type="PDB" id="4OKN">
    <property type="method" value="X-ray"/>
    <property type="resolution" value="2.10 A"/>
    <property type="chains" value="A/B/C/D/E/F/G/H=2-332"/>
</dbReference>
<dbReference type="PDB" id="4QO7">
    <property type="method" value="X-ray"/>
    <property type="resolution" value="2.14 A"/>
    <property type="chains" value="A/B/C/D=2-332"/>
</dbReference>
<dbReference type="PDB" id="4QO8">
    <property type="method" value="X-ray"/>
    <property type="resolution" value="2.00 A"/>
    <property type="chains" value="A/B/C/D=2-332"/>
</dbReference>
<dbReference type="PDB" id="4QSM">
    <property type="method" value="X-ray"/>
    <property type="resolution" value="3.00 A"/>
    <property type="chains" value="A/B/C/D/E/F/G/H=2-332"/>
</dbReference>
<dbReference type="PDB" id="4QT0">
    <property type="method" value="X-ray"/>
    <property type="resolution" value="3.20 A"/>
    <property type="chains" value="A/B/C/D/E/F/G/H=2-332"/>
</dbReference>
<dbReference type="PDB" id="4R68">
    <property type="method" value="X-ray"/>
    <property type="resolution" value="2.11 A"/>
    <property type="chains" value="A/B/C/D=2-332"/>
</dbReference>
<dbReference type="PDB" id="4R69">
    <property type="method" value="X-ray"/>
    <property type="resolution" value="3.19 A"/>
    <property type="chains" value="A/B/C/D=2-332"/>
</dbReference>
<dbReference type="PDB" id="4RLS">
    <property type="method" value="X-ray"/>
    <property type="resolution" value="1.91 A"/>
    <property type="chains" value="A/B/C/D=2-332"/>
</dbReference>
<dbReference type="PDB" id="4ZVV">
    <property type="method" value="X-ray"/>
    <property type="resolution" value="2.20 A"/>
    <property type="chains" value="A/B/C/D=1-332"/>
</dbReference>
<dbReference type="PDB" id="5IXS">
    <property type="method" value="X-ray"/>
    <property type="resolution" value="2.05 A"/>
    <property type="chains" value="A/B/C/D=2-332"/>
</dbReference>
<dbReference type="PDB" id="5IXY">
    <property type="method" value="X-ray"/>
    <property type="resolution" value="3.00 A"/>
    <property type="chains" value="A/B/C/D=2-332"/>
</dbReference>
<dbReference type="PDB" id="5W8H">
    <property type="method" value="X-ray"/>
    <property type="resolution" value="1.80 A"/>
    <property type="chains" value="A/B/C/D=1-332"/>
</dbReference>
<dbReference type="PDB" id="5W8I">
    <property type="method" value="X-ray"/>
    <property type="resolution" value="1.95 A"/>
    <property type="chains" value="A/B/C/D=1-332"/>
</dbReference>
<dbReference type="PDB" id="5W8J">
    <property type="method" value="X-ray"/>
    <property type="resolution" value="1.55 A"/>
    <property type="chains" value="A/B/C/D=1-332"/>
</dbReference>
<dbReference type="PDB" id="5W8K">
    <property type="method" value="X-ray"/>
    <property type="resolution" value="1.60 A"/>
    <property type="chains" value="A/B/C/D=1-332"/>
</dbReference>
<dbReference type="PDB" id="5W8L">
    <property type="method" value="X-ray"/>
    <property type="resolution" value="1.95 A"/>
    <property type="chains" value="A/B/C/D=1-332"/>
</dbReference>
<dbReference type="PDB" id="5ZJD">
    <property type="method" value="X-ray"/>
    <property type="resolution" value="2.39 A"/>
    <property type="chains" value="A/B/C/D/E/F/G/H=2-332"/>
</dbReference>
<dbReference type="PDB" id="5ZJE">
    <property type="method" value="X-ray"/>
    <property type="resolution" value="2.93 A"/>
    <property type="chains" value="A/B/C/D/E/F/G/H/I/J/K/L=2-332"/>
</dbReference>
<dbReference type="PDB" id="5ZJF">
    <property type="method" value="X-ray"/>
    <property type="resolution" value="2.60 A"/>
    <property type="chains" value="A/B/C/D/E/F/G/H/I/J/K/L=2-332"/>
</dbReference>
<dbReference type="PDB" id="6BAD">
    <property type="method" value="X-ray"/>
    <property type="resolution" value="2.10 A"/>
    <property type="chains" value="A/B/C/D=2-332"/>
</dbReference>
<dbReference type="PDB" id="6BAG">
    <property type="method" value="X-ray"/>
    <property type="resolution" value="2.40 A"/>
    <property type="chains" value="A/B/C/D=2-332"/>
</dbReference>
<dbReference type="PDB" id="6BAX">
    <property type="method" value="X-ray"/>
    <property type="resolution" value="2.05 A"/>
    <property type="chains" value="A/B/C/D=2-332"/>
</dbReference>
<dbReference type="PDB" id="6BAZ">
    <property type="method" value="X-ray"/>
    <property type="resolution" value="2.70 A"/>
    <property type="chains" value="A/B/C/D=2-332"/>
</dbReference>
<dbReference type="PDB" id="6BB0">
    <property type="method" value="X-ray"/>
    <property type="resolution" value="1.95 A"/>
    <property type="chains" value="A/B/C/D=2-332"/>
</dbReference>
<dbReference type="PDB" id="6BB1">
    <property type="method" value="X-ray"/>
    <property type="resolution" value="2.30 A"/>
    <property type="chains" value="A/B/C/D/E/F/G/H=2-332"/>
</dbReference>
<dbReference type="PDB" id="6BB2">
    <property type="method" value="X-ray"/>
    <property type="resolution" value="2.47 A"/>
    <property type="chains" value="A/B/C/D/E/F/G/H=2-332"/>
</dbReference>
<dbReference type="PDB" id="6BB3">
    <property type="method" value="X-ray"/>
    <property type="resolution" value="2.40 A"/>
    <property type="chains" value="A/B/C/D=2-332"/>
</dbReference>
<dbReference type="PDB" id="6MV8">
    <property type="method" value="X-ray"/>
    <property type="resolution" value="1.95 A"/>
    <property type="chains" value="A/B/C/D=1-332"/>
</dbReference>
<dbReference type="PDB" id="6MVA">
    <property type="method" value="X-ray"/>
    <property type="resolution" value="2.02 A"/>
    <property type="chains" value="A/B/C/D=1-332"/>
</dbReference>
<dbReference type="PDB" id="6Q0D">
    <property type="method" value="X-ray"/>
    <property type="resolution" value="2.05 A"/>
    <property type="chains" value="A/B/C/D/E/F=1-332"/>
</dbReference>
<dbReference type="PDB" id="6Q13">
    <property type="method" value="X-ray"/>
    <property type="resolution" value="2.00 A"/>
    <property type="chains" value="A/B/C/D=1-332"/>
</dbReference>
<dbReference type="PDB" id="6SBU">
    <property type="method" value="X-ray"/>
    <property type="resolution" value="2.91 A"/>
    <property type="chains" value="A/B/C/D/E/F/G/H=2-332"/>
</dbReference>
<dbReference type="PDB" id="6SBV">
    <property type="method" value="X-ray"/>
    <property type="resolution" value="2.60 A"/>
    <property type="chains" value="A/B/C/D/E/F/G/H=2-332"/>
</dbReference>
<dbReference type="PDB" id="6ZZR">
    <property type="method" value="X-ray"/>
    <property type="resolution" value="2.65 A"/>
    <property type="chains" value="AAA/BBB/CCC/DDD/EEE/FFF/GGG/HHH=2-332"/>
</dbReference>
<dbReference type="PDB" id="7M2N">
    <property type="method" value="X-ray"/>
    <property type="resolution" value="2.50 A"/>
    <property type="chains" value="A/B/C/D=1-332"/>
</dbReference>
<dbReference type="PDB" id="8FW6">
    <property type="method" value="X-ray"/>
    <property type="resolution" value="2.34 A"/>
    <property type="chains" value="A/B=1-332"/>
</dbReference>
<dbReference type="PDB" id="9BK2">
    <property type="method" value="X-ray"/>
    <property type="resolution" value="1.85 A"/>
    <property type="chains" value="A/B/C/D=2-332"/>
</dbReference>
<dbReference type="PDB" id="9BK3">
    <property type="method" value="X-ray"/>
    <property type="resolution" value="2.40 A"/>
    <property type="chains" value="A/B/C/D=2-332"/>
</dbReference>
<dbReference type="PDBsum" id="1I10"/>
<dbReference type="PDBsum" id="4AJP"/>
<dbReference type="PDBsum" id="4JNK"/>
<dbReference type="PDBsum" id="4L4R"/>
<dbReference type="PDBsum" id="4L4S"/>
<dbReference type="PDBsum" id="4M49"/>
<dbReference type="PDBsum" id="4OJN"/>
<dbReference type="PDBsum" id="4OKN"/>
<dbReference type="PDBsum" id="4QO7"/>
<dbReference type="PDBsum" id="4QO8"/>
<dbReference type="PDBsum" id="4QSM"/>
<dbReference type="PDBsum" id="4QT0"/>
<dbReference type="PDBsum" id="4R68"/>
<dbReference type="PDBsum" id="4R69"/>
<dbReference type="PDBsum" id="4RLS"/>
<dbReference type="PDBsum" id="4ZVV"/>
<dbReference type="PDBsum" id="5IXS"/>
<dbReference type="PDBsum" id="5IXY"/>
<dbReference type="PDBsum" id="5W8H"/>
<dbReference type="PDBsum" id="5W8I"/>
<dbReference type="PDBsum" id="5W8J"/>
<dbReference type="PDBsum" id="5W8K"/>
<dbReference type="PDBsum" id="5W8L"/>
<dbReference type="PDBsum" id="5ZJD"/>
<dbReference type="PDBsum" id="5ZJE"/>
<dbReference type="PDBsum" id="5ZJF"/>
<dbReference type="PDBsum" id="6BAD"/>
<dbReference type="PDBsum" id="6BAG"/>
<dbReference type="PDBsum" id="6BAX"/>
<dbReference type="PDBsum" id="6BAZ"/>
<dbReference type="PDBsum" id="6BB0"/>
<dbReference type="PDBsum" id="6BB1"/>
<dbReference type="PDBsum" id="6BB2"/>
<dbReference type="PDBsum" id="6BB3"/>
<dbReference type="PDBsum" id="6MV8"/>
<dbReference type="PDBsum" id="6MVA"/>
<dbReference type="PDBsum" id="6Q0D"/>
<dbReference type="PDBsum" id="6Q13"/>
<dbReference type="PDBsum" id="6SBU"/>
<dbReference type="PDBsum" id="6SBV"/>
<dbReference type="PDBsum" id="6ZZR"/>
<dbReference type="PDBsum" id="7M2N"/>
<dbReference type="PDBsum" id="8FW6"/>
<dbReference type="PDBsum" id="9BK2"/>
<dbReference type="PDBsum" id="9BK3"/>
<dbReference type="SMR" id="P00338"/>
<dbReference type="BioGRID" id="110131">
    <property type="interactions" value="395"/>
</dbReference>
<dbReference type="ComplexPortal" id="CPX-6573">
    <property type="entry name" value="L-lactate dehydrogenase A complex"/>
</dbReference>
<dbReference type="ComplexPortal" id="CPX-6592">
    <property type="entry name" value="L-lactate dehydrogenase complex, A3B1 variant"/>
</dbReference>
<dbReference type="ComplexPortal" id="CPX-6594">
    <property type="entry name" value="L-lactate dehydrogenase complex, A2B2 variant"/>
</dbReference>
<dbReference type="ComplexPortal" id="CPX-6598">
    <property type="entry name" value="L-lactate dehydrogenase complex, A1B3 variant"/>
</dbReference>
<dbReference type="CORUM" id="P00338"/>
<dbReference type="FunCoup" id="P00338">
    <property type="interactions" value="1352"/>
</dbReference>
<dbReference type="IntAct" id="P00338">
    <property type="interactions" value="104"/>
</dbReference>
<dbReference type="MINT" id="P00338"/>
<dbReference type="STRING" id="9606.ENSP00000445175"/>
<dbReference type="BindingDB" id="P00338"/>
<dbReference type="ChEMBL" id="CHEMBL4835"/>
<dbReference type="DrugBank" id="DB11638">
    <property type="generic name" value="Artenimol"/>
</dbReference>
<dbReference type="DrugBank" id="DB09130">
    <property type="generic name" value="Copper"/>
</dbReference>
<dbReference type="DrugBank" id="DB02483">
    <property type="generic name" value="Etheno-NAD"/>
</dbReference>
<dbReference type="DrugBank" id="DB00157">
    <property type="generic name" value="NADH"/>
</dbReference>
<dbReference type="DrugBank" id="DB17635">
    <property type="generic name" value="Nedosiran"/>
</dbReference>
<dbReference type="DrugBank" id="DB02701">
    <property type="generic name" value="Nicotinamide"/>
</dbReference>
<dbReference type="DrugBank" id="DB03940">
    <property type="generic name" value="Oxamic Acid"/>
</dbReference>
<dbReference type="DrugBank" id="DB09118">
    <property type="generic name" value="Stiripentol"/>
</dbReference>
<dbReference type="DrugCentral" id="P00338"/>
<dbReference type="GlyCosmos" id="P00338">
    <property type="glycosylation" value="1 site, 2 glycans"/>
</dbReference>
<dbReference type="GlyGen" id="P00338">
    <property type="glycosylation" value="3 sites, 5 N-linked glycans (1 site), 2 O-linked glycans (2 sites)"/>
</dbReference>
<dbReference type="iPTMnet" id="P00338"/>
<dbReference type="MetOSite" id="P00338"/>
<dbReference type="PhosphoSitePlus" id="P00338"/>
<dbReference type="SwissPalm" id="P00338"/>
<dbReference type="BioMuta" id="LDHA"/>
<dbReference type="DMDM" id="126047"/>
<dbReference type="OGP" id="P00338"/>
<dbReference type="REPRODUCTION-2DPAGE" id="IPI00217966"/>
<dbReference type="CPTAC" id="CPTAC-2749"/>
<dbReference type="CPTAC" id="CPTAC-2750"/>
<dbReference type="CPTAC" id="CPTAC-91"/>
<dbReference type="jPOST" id="P00338"/>
<dbReference type="MassIVE" id="P00338"/>
<dbReference type="PaxDb" id="9606-ENSP00000445175"/>
<dbReference type="PeptideAtlas" id="P00338"/>
<dbReference type="ProteomicsDB" id="51230">
    <molecule id="P00338-1"/>
</dbReference>
<dbReference type="ProteomicsDB" id="51231">
    <molecule id="P00338-2"/>
</dbReference>
<dbReference type="ProteomicsDB" id="51232">
    <molecule id="P00338-3"/>
</dbReference>
<dbReference type="ProteomicsDB" id="51233">
    <molecule id="P00338-4"/>
</dbReference>
<dbReference type="ProteomicsDB" id="51234">
    <molecule id="P00338-5"/>
</dbReference>
<dbReference type="Pumba" id="P00338"/>
<dbReference type="TopDownProteomics" id="P00338-1">
    <molecule id="P00338-1"/>
</dbReference>
<dbReference type="TopDownProteomics" id="P00338-4">
    <molecule id="P00338-4"/>
</dbReference>
<dbReference type="TopDownProteomics" id="P00338-5">
    <molecule id="P00338-5"/>
</dbReference>
<dbReference type="Antibodypedia" id="4200">
    <property type="antibodies" value="954 antibodies from 42 providers"/>
</dbReference>
<dbReference type="DNASU" id="3939"/>
<dbReference type="Ensembl" id="ENST00000227157.8">
    <molecule id="P00338-5"/>
    <property type="protein sequence ID" value="ENSP00000227157.4"/>
    <property type="gene ID" value="ENSG00000134333.15"/>
</dbReference>
<dbReference type="Ensembl" id="ENST00000379412.9">
    <molecule id="P00338-3"/>
    <property type="protein sequence ID" value="ENSP00000368722.6"/>
    <property type="gene ID" value="ENSG00000134333.15"/>
</dbReference>
<dbReference type="Ensembl" id="ENST00000396222.6">
    <molecule id="P00338-2"/>
    <property type="protein sequence ID" value="ENSP00000379524.2"/>
    <property type="gene ID" value="ENSG00000134333.15"/>
</dbReference>
<dbReference type="Ensembl" id="ENST00000422447.8">
    <molecule id="P00338-1"/>
    <property type="protein sequence ID" value="ENSP00000395337.3"/>
    <property type="gene ID" value="ENSG00000134333.15"/>
</dbReference>
<dbReference type="Ensembl" id="ENST00000430553.6">
    <molecule id="P00338-4"/>
    <property type="protein sequence ID" value="ENSP00000406172.2"/>
    <property type="gene ID" value="ENSG00000134333.15"/>
</dbReference>
<dbReference type="Ensembl" id="ENST00000542179.1">
    <molecule id="P00338-1"/>
    <property type="protein sequence ID" value="ENSP00000445331.1"/>
    <property type="gene ID" value="ENSG00000134333.15"/>
</dbReference>
<dbReference type="Ensembl" id="ENST00000671981.1">
    <molecule id="P00338-1"/>
    <property type="protein sequence ID" value="ENSP00000499898.1"/>
    <property type="gene ID" value="ENSG00000288299.1"/>
</dbReference>
<dbReference type="Ensembl" id="ENST00000672078.1">
    <molecule id="P00338-5"/>
    <property type="protein sequence ID" value="ENSP00000500354.1"/>
    <property type="gene ID" value="ENSG00000288299.1"/>
</dbReference>
<dbReference type="Ensembl" id="ENST00000672405.1">
    <molecule id="P00338-1"/>
    <property type="protein sequence ID" value="ENSP00000500953.1"/>
    <property type="gene ID" value="ENSG00000288299.1"/>
</dbReference>
<dbReference type="Ensembl" id="ENST00000672996.1">
    <molecule id="P00338-4"/>
    <property type="protein sequence ID" value="ENSP00000500284.1"/>
    <property type="gene ID" value="ENSG00000288299.1"/>
</dbReference>
<dbReference type="Ensembl" id="ENST00000673007.1">
    <molecule id="P00338-3"/>
    <property type="protein sequence ID" value="ENSP00000500603.1"/>
    <property type="gene ID" value="ENSG00000288299.1"/>
</dbReference>
<dbReference type="Ensembl" id="ENST00000673083.1">
    <molecule id="P00338-2"/>
    <property type="protein sequence ID" value="ENSP00000500168.1"/>
    <property type="gene ID" value="ENSG00000288299.1"/>
</dbReference>
<dbReference type="Ensembl" id="ENST00000673204.1">
    <molecule id="P00338-1"/>
    <property type="protein sequence ID" value="ENSP00000499977.1"/>
    <property type="gene ID" value="ENSG00000288299.1"/>
</dbReference>
<dbReference type="GeneID" id="3939"/>
<dbReference type="KEGG" id="hsa:3939"/>
<dbReference type="MANE-Select" id="ENST00000422447.8">
    <property type="protein sequence ID" value="ENSP00000395337.3"/>
    <property type="RefSeq nucleotide sequence ID" value="NM_005566.4"/>
    <property type="RefSeq protein sequence ID" value="NP_005557.1"/>
</dbReference>
<dbReference type="UCSC" id="uc001mol.4">
    <molecule id="P00338-1"/>
    <property type="organism name" value="human"/>
</dbReference>
<dbReference type="AGR" id="HGNC:6535"/>
<dbReference type="CTD" id="3939"/>
<dbReference type="DisGeNET" id="3939"/>
<dbReference type="GeneCards" id="LDHA"/>
<dbReference type="HGNC" id="HGNC:6535">
    <property type="gene designation" value="LDHA"/>
</dbReference>
<dbReference type="HPA" id="ENSG00000134333">
    <property type="expression patterns" value="Low tissue specificity"/>
</dbReference>
<dbReference type="MalaCards" id="LDHA"/>
<dbReference type="MIM" id="150000">
    <property type="type" value="gene"/>
</dbReference>
<dbReference type="MIM" id="612933">
    <property type="type" value="phenotype"/>
</dbReference>
<dbReference type="neXtProt" id="NX_P00338"/>
<dbReference type="OpenTargets" id="ENSG00000134333"/>
<dbReference type="Orphanet" id="284426">
    <property type="disease" value="Glycogen storage disease due to lactate dehydrogenase M-subunit deficiency"/>
</dbReference>
<dbReference type="PharmGKB" id="PA30319"/>
<dbReference type="VEuPathDB" id="HostDB:ENSG00000134333"/>
<dbReference type="eggNOG" id="KOG1495">
    <property type="taxonomic scope" value="Eukaryota"/>
</dbReference>
<dbReference type="GeneTree" id="ENSGT00940000153201"/>
<dbReference type="HOGENOM" id="CLU_045401_0_2_1"/>
<dbReference type="InParanoid" id="P00338"/>
<dbReference type="OMA" id="EWDLDDY"/>
<dbReference type="OrthoDB" id="5405561at2759"/>
<dbReference type="PAN-GO" id="P00338">
    <property type="GO annotations" value="1 GO annotation based on evolutionary models"/>
</dbReference>
<dbReference type="PhylomeDB" id="P00338"/>
<dbReference type="TreeFam" id="TF314963"/>
<dbReference type="BRENDA" id="1.1.1.27">
    <property type="organism ID" value="2681"/>
</dbReference>
<dbReference type="PathwayCommons" id="P00338"/>
<dbReference type="Reactome" id="R-HSA-70268">
    <property type="pathway name" value="Pyruvate metabolism"/>
</dbReference>
<dbReference type="Reactome" id="R-HSA-9861718">
    <property type="pathway name" value="Regulation of pyruvate metabolism"/>
</dbReference>
<dbReference type="SABIO-RK" id="P00338"/>
<dbReference type="SignaLink" id="P00338"/>
<dbReference type="SIGNOR" id="P00338"/>
<dbReference type="UniPathway" id="UPA00554">
    <property type="reaction ID" value="UER00611"/>
</dbReference>
<dbReference type="BioGRID-ORCS" id="3939">
    <property type="hits" value="203 hits in 1153 CRISPR screens"/>
</dbReference>
<dbReference type="CD-CODE" id="91857CE7">
    <property type="entry name" value="Nucleolus"/>
</dbReference>
<dbReference type="CD-CODE" id="FB4E32DD">
    <property type="entry name" value="Presynaptic clusters and postsynaptic densities"/>
</dbReference>
<dbReference type="ChiTaRS" id="LDHA">
    <property type="organism name" value="human"/>
</dbReference>
<dbReference type="EvolutionaryTrace" id="P00338"/>
<dbReference type="GeneWiki" id="LDHA"/>
<dbReference type="GenomeRNAi" id="3939"/>
<dbReference type="Pharos" id="P00338">
    <property type="development level" value="Tchem"/>
</dbReference>
<dbReference type="PRO" id="PR:P00338"/>
<dbReference type="Proteomes" id="UP000005640">
    <property type="component" value="Chromosome 11"/>
</dbReference>
<dbReference type="RNAct" id="P00338">
    <property type="molecule type" value="protein"/>
</dbReference>
<dbReference type="Bgee" id="ENSG00000134333">
    <property type="expression patterns" value="Expressed in ventricular zone and 117 other cell types or tissues"/>
</dbReference>
<dbReference type="ExpressionAtlas" id="P00338">
    <property type="expression patterns" value="baseline and differential"/>
</dbReference>
<dbReference type="GO" id="GO:0005829">
    <property type="term" value="C:cytosol"/>
    <property type="evidence" value="ECO:0000304"/>
    <property type="project" value="Reactome"/>
</dbReference>
<dbReference type="GO" id="GO:0070062">
    <property type="term" value="C:extracellular exosome"/>
    <property type="evidence" value="ECO:0007005"/>
    <property type="project" value="UniProtKB"/>
</dbReference>
<dbReference type="GO" id="GO:0016020">
    <property type="term" value="C:membrane"/>
    <property type="evidence" value="ECO:0007005"/>
    <property type="project" value="UniProtKB"/>
</dbReference>
<dbReference type="GO" id="GO:0005739">
    <property type="term" value="C:mitochondrion"/>
    <property type="evidence" value="ECO:0000318"/>
    <property type="project" value="GO_Central"/>
</dbReference>
<dbReference type="GO" id="GO:0005634">
    <property type="term" value="C:nucleus"/>
    <property type="evidence" value="ECO:0007005"/>
    <property type="project" value="UniProtKB"/>
</dbReference>
<dbReference type="GO" id="GO:1990204">
    <property type="term" value="C:oxidoreductase complex"/>
    <property type="evidence" value="ECO:0000353"/>
    <property type="project" value="ComplexPortal"/>
</dbReference>
<dbReference type="GO" id="GO:0035686">
    <property type="term" value="C:sperm fibrous sheath"/>
    <property type="evidence" value="ECO:0007669"/>
    <property type="project" value="Ensembl"/>
</dbReference>
<dbReference type="GO" id="GO:0045296">
    <property type="term" value="F:cadherin binding"/>
    <property type="evidence" value="ECO:0007005"/>
    <property type="project" value="BHF-UCL"/>
</dbReference>
<dbReference type="GO" id="GO:0042802">
    <property type="term" value="F:identical protein binding"/>
    <property type="evidence" value="ECO:0000353"/>
    <property type="project" value="UniProtKB"/>
</dbReference>
<dbReference type="GO" id="GO:0004459">
    <property type="term" value="F:L-lactate dehydrogenase activity"/>
    <property type="evidence" value="ECO:0000315"/>
    <property type="project" value="UniProtKB"/>
</dbReference>
<dbReference type="GO" id="GO:0019661">
    <property type="term" value="P:glucose catabolic process to lactate via pyruvate"/>
    <property type="evidence" value="ECO:0007669"/>
    <property type="project" value="Ensembl"/>
</dbReference>
<dbReference type="GO" id="GO:0006096">
    <property type="term" value="P:glycolytic process"/>
    <property type="evidence" value="ECO:0000303"/>
    <property type="project" value="UniProtKB"/>
</dbReference>
<dbReference type="GO" id="GO:0006089">
    <property type="term" value="P:lactate metabolic process"/>
    <property type="evidence" value="ECO:0000314"/>
    <property type="project" value="ComplexPortal"/>
</dbReference>
<dbReference type="GO" id="GO:0042867">
    <property type="term" value="P:pyruvate catabolic process"/>
    <property type="evidence" value="ECO:0007669"/>
    <property type="project" value="Ensembl"/>
</dbReference>
<dbReference type="GO" id="GO:0006090">
    <property type="term" value="P:pyruvate metabolic process"/>
    <property type="evidence" value="ECO:0000314"/>
    <property type="project" value="ComplexPortal"/>
</dbReference>
<dbReference type="GO" id="GO:0021762">
    <property type="term" value="P:substantia nigra development"/>
    <property type="evidence" value="ECO:0007007"/>
    <property type="project" value="UniProtKB"/>
</dbReference>
<dbReference type="CDD" id="cd05293">
    <property type="entry name" value="LDH_1"/>
    <property type="match status" value="1"/>
</dbReference>
<dbReference type="FunFam" id="3.40.50.720:FF:000029">
    <property type="entry name" value="L-lactate dehydrogenase A chain"/>
    <property type="match status" value="1"/>
</dbReference>
<dbReference type="FunFam" id="3.90.110.10:FF:000003">
    <property type="entry name" value="L-lactate dehydrogenase A chain"/>
    <property type="match status" value="1"/>
</dbReference>
<dbReference type="Gene3D" id="3.90.110.10">
    <property type="entry name" value="Lactate dehydrogenase/glycoside hydrolase, family 4, C-terminal"/>
    <property type="match status" value="1"/>
</dbReference>
<dbReference type="Gene3D" id="3.40.50.720">
    <property type="entry name" value="NAD(P)-binding Rossmann-like Domain"/>
    <property type="match status" value="1"/>
</dbReference>
<dbReference type="HAMAP" id="MF_00488">
    <property type="entry name" value="Lactate_dehydrog"/>
    <property type="match status" value="1"/>
</dbReference>
<dbReference type="InterPro" id="IPR001557">
    <property type="entry name" value="L-lactate/malate_DH"/>
</dbReference>
<dbReference type="InterPro" id="IPR011304">
    <property type="entry name" value="L-lactate_DH"/>
</dbReference>
<dbReference type="InterPro" id="IPR018177">
    <property type="entry name" value="L-lactate_DH_AS"/>
</dbReference>
<dbReference type="InterPro" id="IPR022383">
    <property type="entry name" value="Lactate/malate_DH_C"/>
</dbReference>
<dbReference type="InterPro" id="IPR001236">
    <property type="entry name" value="Lactate/malate_DH_N"/>
</dbReference>
<dbReference type="InterPro" id="IPR015955">
    <property type="entry name" value="Lactate_DH/Glyco_Ohase_4_C"/>
</dbReference>
<dbReference type="InterPro" id="IPR036291">
    <property type="entry name" value="NAD(P)-bd_dom_sf"/>
</dbReference>
<dbReference type="NCBIfam" id="TIGR01771">
    <property type="entry name" value="L-LDH-NAD"/>
    <property type="match status" value="1"/>
</dbReference>
<dbReference type="NCBIfam" id="NF000824">
    <property type="entry name" value="PRK00066.1"/>
    <property type="match status" value="1"/>
</dbReference>
<dbReference type="PANTHER" id="PTHR43128">
    <property type="entry name" value="L-2-HYDROXYCARBOXYLATE DEHYDROGENASE (NAD(P)(+))"/>
    <property type="match status" value="1"/>
</dbReference>
<dbReference type="PANTHER" id="PTHR43128:SF10">
    <property type="entry name" value="L-LACTATE DEHYDROGENASE A CHAIN"/>
    <property type="match status" value="1"/>
</dbReference>
<dbReference type="Pfam" id="PF02866">
    <property type="entry name" value="Ldh_1_C"/>
    <property type="match status" value="1"/>
</dbReference>
<dbReference type="Pfam" id="PF00056">
    <property type="entry name" value="Ldh_1_N"/>
    <property type="match status" value="1"/>
</dbReference>
<dbReference type="PIRSF" id="PIRSF000102">
    <property type="entry name" value="Lac_mal_DH"/>
    <property type="match status" value="1"/>
</dbReference>
<dbReference type="PRINTS" id="PR00086">
    <property type="entry name" value="LLDHDRGNASE"/>
</dbReference>
<dbReference type="SUPFAM" id="SSF56327">
    <property type="entry name" value="LDH C-terminal domain-like"/>
    <property type="match status" value="1"/>
</dbReference>
<dbReference type="SUPFAM" id="SSF51735">
    <property type="entry name" value="NAD(P)-binding Rossmann-fold domains"/>
    <property type="match status" value="1"/>
</dbReference>
<dbReference type="PROSITE" id="PS00064">
    <property type="entry name" value="L_LDH"/>
    <property type="match status" value="1"/>
</dbReference>
<comment type="function">
    <text evidence="3">Interconverts simultaneously and stereospecifically pyruvate and lactate with concomitant interconversion of NADH and NAD(+).</text>
</comment>
<comment type="catalytic activity">
    <reaction evidence="3">
        <text>(S)-lactate + NAD(+) = pyruvate + NADH + H(+)</text>
        <dbReference type="Rhea" id="RHEA:23444"/>
        <dbReference type="ChEBI" id="CHEBI:15361"/>
        <dbReference type="ChEBI" id="CHEBI:15378"/>
        <dbReference type="ChEBI" id="CHEBI:16651"/>
        <dbReference type="ChEBI" id="CHEBI:57540"/>
        <dbReference type="ChEBI" id="CHEBI:57945"/>
        <dbReference type="EC" id="1.1.1.27"/>
    </reaction>
    <physiologicalReaction direction="left-to-right" evidence="3">
        <dbReference type="Rhea" id="RHEA:23445"/>
    </physiologicalReaction>
    <physiologicalReaction direction="right-to-left" evidence="3">
        <dbReference type="Rhea" id="RHEA:23446"/>
    </physiologicalReaction>
</comment>
<comment type="activity regulation">
    <text evidence="8">Fermentation of pyruvate to lactate is inhibited when bound to folliculin FLCN, perhaps partly by FLCN preventing binding of cofactor NADH (PubMed:34381247).</text>
</comment>
<comment type="pathway">
    <text evidence="15">Fermentation; pyruvate fermentation to lactate; (S)-lactate from pyruvate: step 1/1.</text>
</comment>
<comment type="subunit">
    <text evidence="3 7 8">Homotetramer (PubMed:11276087). Interacts with PTEN upstream reading frame protein MP31 (PubMed:33406399). Interacts with folliculin FLCN; the interaction is direct and inhibits enzymatic activity (PubMed:34381247).</text>
</comment>
<comment type="interaction">
    <interactant intactId="EBI-372327">
        <id>P00338</id>
    </interactant>
    <interactant intactId="EBI-351896">
        <id>P11142</id>
        <label>HSPA8</label>
    </interactant>
    <organismsDiffer>false</organismsDiffer>
    <experiments>4</experiments>
</comment>
<comment type="interaction">
    <interactant intactId="EBI-372327">
        <id>P00338</id>
    </interactant>
    <interactant intactId="EBI-372327">
        <id>P00338</id>
        <label>LDHA</label>
    </interactant>
    <organismsDiffer>false</organismsDiffer>
    <experiments>3</experiments>
</comment>
<comment type="interaction">
    <interactant intactId="EBI-372327">
        <id>P00338</id>
    </interactant>
    <interactant intactId="EBI-358748">
        <id>P07195</id>
        <label>LDHB</label>
    </interactant>
    <organismsDiffer>false</organismsDiffer>
    <experiments>5</experiments>
</comment>
<comment type="interaction">
    <interactant intactId="EBI-372327">
        <id>P00338</id>
    </interactant>
    <interactant intactId="EBI-21716174">
        <id>P07864</id>
        <label>LDHC</label>
    </interactant>
    <organismsDiffer>false</organismsDiffer>
    <experiments>6</experiments>
</comment>
<comment type="interaction">
    <interactant intactId="EBI-10195200">
        <id>P00338-3</id>
    </interactant>
    <interactant intactId="EBI-358748">
        <id>P07195</id>
        <label>LDHB</label>
    </interactant>
    <organismsDiffer>false</organismsDiffer>
    <experiments>9</experiments>
</comment>
<comment type="interaction">
    <interactant intactId="EBI-10195200">
        <id>P00338-3</id>
    </interactant>
    <interactant intactId="EBI-17232183">
        <id>A0A286YFD7</id>
        <label>MAPK10</label>
    </interactant>
    <organismsDiffer>false</organismsDiffer>
    <experiments>5</experiments>
</comment>
<comment type="interaction">
    <interactant intactId="EBI-10195200">
        <id>P00338-3</id>
    </interactant>
    <interactant intactId="EBI-10241715">
        <id>Q499Y8</id>
        <label>MAPK10</label>
    </interactant>
    <organismsDiffer>false</organismsDiffer>
    <experiments>3</experiments>
</comment>
<comment type="subcellular location">
    <subcellularLocation>
        <location>Cytoplasm</location>
    </subcellularLocation>
</comment>
<comment type="alternative products">
    <event type="alternative splicing"/>
    <isoform>
        <id>P00338-1</id>
        <name>1</name>
        <sequence type="displayed"/>
    </isoform>
    <isoform>
        <id>P00338-2</id>
        <name>2</name>
        <sequence type="described" ref="VSP_014261 VSP_042787"/>
    </isoform>
    <isoform>
        <id>P00338-3</id>
        <name>3</name>
        <sequence type="described" ref="VSP_042206"/>
    </isoform>
    <isoform>
        <id>P00338-4</id>
        <name>4</name>
        <sequence type="described" ref="VSP_042786"/>
    </isoform>
    <isoform>
        <id>P00338-5</id>
        <name>5</name>
        <sequence type="described" ref="VSP_042788 VSP_042789"/>
    </isoform>
</comment>
<comment type="tissue specificity">
    <text evidence="15">Predominantly expressed in anaerobic tissues such as skeletal muscle and liver.</text>
</comment>
<comment type="PTM">
    <text evidence="5">ISGylated.</text>
</comment>
<comment type="disease" evidence="6">
    <disease id="DI-02478">
        <name>Glycogen storage disease 11</name>
        <acronym>GSD11</acronym>
        <description>A metabolic disorder that results in exertional myoglobinuria, pain, cramps and easy fatigue.</description>
        <dbReference type="MIM" id="612933"/>
    </disease>
    <text>The disease is caused by variants affecting the gene represented in this entry.</text>
</comment>
<comment type="similarity">
    <text evidence="14">Belongs to the LDH/MDH superfamily. LDH family.</text>
</comment>
<comment type="online information" name="Wikipedia">
    <link uri="https://en.wikipedia.org/wiki/Lactate_dehydrogenase"/>
    <text>Lactate dehydrogenase entry</text>
</comment>
<comment type="online information" name="Protein Spotlight">
    <link uri="https://www.proteinspotlight.org/back_issues/109"/>
    <text>Another dark horse - Issue 109 of September 2009</text>
</comment>
<protein>
    <recommendedName>
        <fullName evidence="14">L-lactate dehydrogenase A chain</fullName>
        <shortName>LDH-A</shortName>
        <ecNumber evidence="3">1.1.1.27</ecNumber>
    </recommendedName>
    <alternativeName>
        <fullName>Cell proliferation-inducing gene 19 protein</fullName>
    </alternativeName>
    <alternativeName>
        <fullName>LDH muscle subunit</fullName>
        <shortName evidence="12">LDH-M</shortName>
    </alternativeName>
    <alternativeName>
        <fullName>Renal carcinoma antigen NY-REN-59</fullName>
    </alternativeName>
</protein>
<gene>
    <name evidence="16" type="primary">LDHA</name>
    <name type="ORF">PIG19</name>
</gene>
<evidence type="ECO:0000250" key="1">
    <source>
        <dbReference type="UniProtKB" id="P04642"/>
    </source>
</evidence>
<evidence type="ECO:0000250" key="2">
    <source>
        <dbReference type="UniProtKB" id="P06151"/>
    </source>
</evidence>
<evidence type="ECO:0000269" key="3">
    <source>
    </source>
</evidence>
<evidence type="ECO:0000269" key="4">
    <source>
    </source>
</evidence>
<evidence type="ECO:0000269" key="5">
    <source>
    </source>
</evidence>
<evidence type="ECO:0000269" key="6">
    <source>
    </source>
</evidence>
<evidence type="ECO:0000269" key="7">
    <source>
    </source>
</evidence>
<evidence type="ECO:0000269" key="8">
    <source>
    </source>
</evidence>
<evidence type="ECO:0000269" key="9">
    <source>
    </source>
</evidence>
<evidence type="ECO:0000269" key="10">
    <source ref="10"/>
</evidence>
<evidence type="ECO:0000269" key="11">
    <source ref="6"/>
</evidence>
<evidence type="ECO:0000303" key="12">
    <source>
    </source>
</evidence>
<evidence type="ECO:0000303" key="13">
    <source>
    </source>
</evidence>
<evidence type="ECO:0000305" key="14"/>
<evidence type="ECO:0000305" key="15">
    <source>
    </source>
</evidence>
<evidence type="ECO:0000312" key="16">
    <source>
        <dbReference type="HGNC" id="HGNC:6535"/>
    </source>
</evidence>
<evidence type="ECO:0007744" key="17">
    <source>
    </source>
</evidence>
<evidence type="ECO:0007744" key="18">
    <source>
    </source>
</evidence>
<evidence type="ECO:0007744" key="19">
    <source>
    </source>
</evidence>
<evidence type="ECO:0007744" key="20">
    <source>
    </source>
</evidence>
<evidence type="ECO:0007744" key="21">
    <source>
    </source>
</evidence>
<evidence type="ECO:0007744" key="22">
    <source>
    </source>
</evidence>
<evidence type="ECO:0007744" key="23">
    <source>
    </source>
</evidence>
<evidence type="ECO:0007829" key="24">
    <source>
        <dbReference type="PDB" id="5W8I"/>
    </source>
</evidence>
<evidence type="ECO:0007829" key="25">
    <source>
        <dbReference type="PDB" id="5W8J"/>
    </source>
</evidence>
<evidence type="ECO:0007829" key="26">
    <source>
        <dbReference type="PDB" id="5ZJE"/>
    </source>
</evidence>
<evidence type="ECO:0007829" key="27">
    <source>
        <dbReference type="PDB" id="6Q0D"/>
    </source>
</evidence>
<proteinExistence type="evidence at protein level"/>
<sequence length="332" mass="36689">MATLKDQLIYNLLKEEQTPQNKITVVGVGAVGMACAISILMKDLADELALVDVIEDKLKGEMMDLQHGSLFLRTPKIVSGKDYNVTANSKLVIITAGARQQEGESRLNLVQRNVNIFKFIIPNVVKYSPNCKLLIVSNPVDILTYVAWKISGFPKNRVIGSGCNLDSARFRYLMGERLGVHPLSCHGWVLGEHGDSSVPVWSGMNVAGVSLKTLHPDLGTDKDKEQWKEVHKQVVESAYEVIKLKGYTSWAIGLSVADLAESIMKNLRRVHPVSTMIKGLYGIKDDVFLSVPCILGQNGISDLVKVTLTSEEEARLKKSADTLWGIQKELQF</sequence>
<feature type="initiator methionine" description="Removed" evidence="10 17 20">
    <location>
        <position position="1"/>
    </location>
</feature>
<feature type="chain" id="PRO_0000168411" description="L-lactate dehydrogenase A chain">
    <location>
        <begin position="2"/>
        <end position="332"/>
    </location>
</feature>
<feature type="active site" description="Proton acceptor">
    <location>
        <position position="193"/>
    </location>
</feature>
<feature type="binding site" evidence="3">
    <location>
        <begin position="29"/>
        <end position="57"/>
    </location>
    <ligand>
        <name>NAD(+)</name>
        <dbReference type="ChEBI" id="CHEBI:57540"/>
    </ligand>
</feature>
<feature type="binding site" evidence="3">
    <location>
        <position position="99"/>
    </location>
    <ligand>
        <name>NAD(+)</name>
        <dbReference type="ChEBI" id="CHEBI:57540"/>
    </ligand>
</feature>
<feature type="binding site">
    <location>
        <position position="106"/>
    </location>
    <ligand>
        <name>substrate</name>
    </ligand>
</feature>
<feature type="binding site" evidence="3">
    <location>
        <position position="138"/>
    </location>
    <ligand>
        <name>NAD(+)</name>
        <dbReference type="ChEBI" id="CHEBI:57540"/>
    </ligand>
</feature>
<feature type="binding site">
    <location>
        <position position="138"/>
    </location>
    <ligand>
        <name>substrate</name>
    </ligand>
</feature>
<feature type="binding site">
    <location>
        <position position="169"/>
    </location>
    <ligand>
        <name>substrate</name>
    </ligand>
</feature>
<feature type="binding site">
    <location>
        <position position="248"/>
    </location>
    <ligand>
        <name>substrate</name>
    </ligand>
</feature>
<feature type="modified residue" description="N-acetylalanine" evidence="10 17 20">
    <location>
        <position position="2"/>
    </location>
</feature>
<feature type="modified residue" description="N6-acetyllysine; alternate" evidence="18">
    <location>
        <position position="5"/>
    </location>
</feature>
<feature type="modified residue" description="N6-succinyllysine; alternate" evidence="2">
    <location>
        <position position="5"/>
    </location>
</feature>
<feature type="modified residue" description="Phosphotyrosine" evidence="19">
    <location>
        <position position="10"/>
    </location>
</feature>
<feature type="modified residue" description="N6-acetyllysine" evidence="18">
    <location>
        <position position="14"/>
    </location>
</feature>
<feature type="modified residue" description="Phosphothreonine" evidence="21">
    <location>
        <position position="18"/>
    </location>
</feature>
<feature type="modified residue" description="N6-acetyllysine; alternate" evidence="18">
    <location>
        <position position="57"/>
    </location>
</feature>
<feature type="modified residue" description="N6-acetyllysine" evidence="18">
    <location>
        <position position="81"/>
    </location>
</feature>
<feature type="modified residue" description="N6-acetyllysine; alternate" evidence="18">
    <location>
        <position position="118"/>
    </location>
</feature>
<feature type="modified residue" description="N6-succinyllysine; alternate" evidence="2">
    <location>
        <position position="118"/>
    </location>
</feature>
<feature type="modified residue" description="N6-acetyllysine" evidence="18">
    <location>
        <position position="126"/>
    </location>
</feature>
<feature type="modified residue" description="N6-acetyllysine" evidence="2">
    <location>
        <position position="224"/>
    </location>
</feature>
<feature type="modified residue" description="N6-acetyllysine" evidence="2">
    <location>
        <position position="232"/>
    </location>
</feature>
<feature type="modified residue" description="Phosphotyrosine" evidence="2">
    <location>
        <position position="239"/>
    </location>
</feature>
<feature type="modified residue" description="N6-acetyllysine" evidence="2">
    <location>
        <position position="243"/>
    </location>
</feature>
<feature type="modified residue" description="Phosphothreonine" evidence="1">
    <location>
        <position position="309"/>
    </location>
</feature>
<feature type="modified residue" description="Phosphoserine" evidence="21 22">
    <location>
        <position position="310"/>
    </location>
</feature>
<feature type="modified residue" description="N6-acetyllysine; alternate" evidence="18">
    <location>
        <position position="318"/>
    </location>
</feature>
<feature type="modified residue" description="N6-succinyllysine; alternate" evidence="2">
    <location>
        <position position="318"/>
    </location>
</feature>
<feature type="modified residue" description="Phosphothreonine" evidence="1">
    <location>
        <position position="322"/>
    </location>
</feature>
<feature type="cross-link" description="Glycyl lysine isopeptide (Lys-Gly) (interchain with G-Cter in SUMO2); alternate" evidence="23">
    <location>
        <position position="57"/>
    </location>
</feature>
<feature type="splice variant" id="VSP_042206" description="In isoform 3." evidence="13">
    <original>M</original>
    <variation>MGEPSGGYTYTQTSIFLFHAKIPFGSKSNM</variation>
    <location>
        <position position="1"/>
    </location>
</feature>
<feature type="splice variant" id="VSP_042786" description="In isoform 4." evidence="13">
    <location>
        <begin position="82"/>
        <end position="139"/>
    </location>
</feature>
<feature type="splice variant" id="VSP_014261" description="In isoform 2." evidence="13">
    <original>VHKQVVESAYEVIKLKGYTSWAIGLSVADLAESIMKNLRRVHPVS</original>
    <variation>CRYTLGDPKGAAILKSSDVISFHCLGYNRILGGGCACCPFYLICD</variation>
    <location>
        <begin position="230"/>
        <end position="274"/>
    </location>
</feature>
<feature type="splice variant" id="VSP_042788" description="In isoform 5." evidence="14">
    <original>SAYEV</original>
    <variation>RVFTE</variation>
    <location>
        <begin position="237"/>
        <end position="241"/>
    </location>
</feature>
<feature type="splice variant" id="VSP_042789" description="In isoform 5." evidence="14">
    <location>
        <begin position="242"/>
        <end position="332"/>
    </location>
</feature>
<feature type="splice variant" id="VSP_042787" description="In isoform 2." evidence="13">
    <location>
        <begin position="275"/>
        <end position="332"/>
    </location>
</feature>
<feature type="sequence variant" id="VAR_004180" description="In dbSNP:rs748436361." evidence="9 11">
    <original>K</original>
    <variation>E</variation>
    <location>
        <position position="222"/>
    </location>
</feature>
<feature type="sequence variant" id="VAR_004181" description="In dbSNP:rs200093825." evidence="4">
    <original>R</original>
    <variation>C</variation>
    <location>
        <position position="315"/>
    </location>
</feature>
<feature type="mutagenesis site" description="Abolishes interaction with MP31." evidence="7">
    <original>D</original>
    <variation>A</variation>
    <location>
        <position position="56"/>
    </location>
</feature>
<feature type="mutagenesis site" description="Abolishes interaction with MP31." evidence="7">
    <original>R</original>
    <variation>A</variation>
    <location>
        <position position="99"/>
    </location>
</feature>
<feature type="mutagenesis site" description="Increases binding to FLCN." evidence="8">
    <original>R</original>
    <variation>A</variation>
    <variation>K</variation>
    <variation>Q</variation>
    <location>
        <position position="106"/>
    </location>
</feature>
<feature type="helix" evidence="25">
    <location>
        <begin position="4"/>
        <end position="8"/>
    </location>
</feature>
<feature type="strand" evidence="25">
    <location>
        <begin position="9"/>
        <end position="11"/>
    </location>
</feature>
<feature type="strand" evidence="25">
    <location>
        <begin position="20"/>
        <end position="26"/>
    </location>
</feature>
<feature type="helix" evidence="25">
    <location>
        <begin position="30"/>
        <end position="41"/>
    </location>
</feature>
<feature type="strand" evidence="25">
    <location>
        <begin position="46"/>
        <end position="51"/>
    </location>
</feature>
<feature type="helix" evidence="25">
    <location>
        <begin position="55"/>
        <end position="67"/>
    </location>
</feature>
<feature type="helix" evidence="25">
    <location>
        <begin position="68"/>
        <end position="71"/>
    </location>
</feature>
<feature type="strand" evidence="25">
    <location>
        <begin position="76"/>
        <end position="79"/>
    </location>
</feature>
<feature type="helix" evidence="25">
    <location>
        <begin position="83"/>
        <end position="86"/>
    </location>
</feature>
<feature type="strand" evidence="25">
    <location>
        <begin position="90"/>
        <end position="94"/>
    </location>
</feature>
<feature type="helix" evidence="25">
    <location>
        <begin position="106"/>
        <end position="127"/>
    </location>
</feature>
<feature type="strand" evidence="25">
    <location>
        <begin position="132"/>
        <end position="135"/>
    </location>
</feature>
<feature type="strand" evidence="25">
    <location>
        <begin position="137"/>
        <end position="139"/>
    </location>
</feature>
<feature type="helix" evidence="25">
    <location>
        <begin position="140"/>
        <end position="151"/>
    </location>
</feature>
<feature type="helix" evidence="25">
    <location>
        <begin position="155"/>
        <end position="157"/>
    </location>
</feature>
<feature type="strand" evidence="25">
    <location>
        <begin position="158"/>
        <end position="160"/>
    </location>
</feature>
<feature type="helix" evidence="25">
    <location>
        <begin position="164"/>
        <end position="178"/>
    </location>
</feature>
<feature type="helix" evidence="25">
    <location>
        <begin position="182"/>
        <end position="184"/>
    </location>
</feature>
<feature type="strand" evidence="25">
    <location>
        <begin position="189"/>
        <end position="194"/>
    </location>
</feature>
<feature type="strand" evidence="24">
    <location>
        <begin position="197"/>
        <end position="199"/>
    </location>
</feature>
<feature type="helix" evidence="25">
    <location>
        <begin position="201"/>
        <end position="203"/>
    </location>
</feature>
<feature type="helix" evidence="25">
    <location>
        <begin position="211"/>
        <end position="214"/>
    </location>
</feature>
<feature type="turn" evidence="25">
    <location>
        <begin position="216"/>
        <end position="219"/>
    </location>
</feature>
<feature type="strand" evidence="27">
    <location>
        <begin position="220"/>
        <end position="222"/>
    </location>
</feature>
<feature type="helix" evidence="25">
    <location>
        <begin position="228"/>
        <end position="245"/>
    </location>
</feature>
<feature type="helix" evidence="25">
    <location>
        <begin position="250"/>
        <end position="264"/>
    </location>
</feature>
<feature type="strand" evidence="25">
    <location>
        <begin position="269"/>
        <end position="276"/>
    </location>
</feature>
<feature type="strand" evidence="26">
    <location>
        <begin position="278"/>
        <end position="280"/>
    </location>
</feature>
<feature type="strand" evidence="25">
    <location>
        <begin position="288"/>
        <end position="296"/>
    </location>
</feature>
<feature type="strand" evidence="25">
    <location>
        <begin position="299"/>
        <end position="304"/>
    </location>
</feature>
<feature type="helix" evidence="25">
    <location>
        <begin position="310"/>
        <end position="327"/>
    </location>
</feature>
<organism>
    <name type="scientific">Homo sapiens</name>
    <name type="common">Human</name>
    <dbReference type="NCBI Taxonomy" id="9606"/>
    <lineage>
        <taxon>Eukaryota</taxon>
        <taxon>Metazoa</taxon>
        <taxon>Chordata</taxon>
        <taxon>Craniata</taxon>
        <taxon>Vertebrata</taxon>
        <taxon>Euteleostomi</taxon>
        <taxon>Mammalia</taxon>
        <taxon>Eutheria</taxon>
        <taxon>Euarchontoglires</taxon>
        <taxon>Primates</taxon>
        <taxon>Haplorrhini</taxon>
        <taxon>Catarrhini</taxon>
        <taxon>Hominidae</taxon>
        <taxon>Homo</taxon>
    </lineage>
</organism>
<keyword id="KW-0002">3D-structure</keyword>
<keyword id="KW-0007">Acetylation</keyword>
<keyword id="KW-0025">Alternative splicing</keyword>
<keyword id="KW-0963">Cytoplasm</keyword>
<keyword id="KW-0903">Direct protein sequencing</keyword>
<keyword id="KW-0225">Disease variant</keyword>
<keyword id="KW-0322">Glycogen storage disease</keyword>
<keyword id="KW-1017">Isopeptide bond</keyword>
<keyword id="KW-0520">NAD</keyword>
<keyword id="KW-0560">Oxidoreductase</keyword>
<keyword id="KW-0597">Phosphoprotein</keyword>
<keyword id="KW-1267">Proteomics identification</keyword>
<keyword id="KW-1185">Reference proteome</keyword>
<keyword id="KW-0832">Ubl conjugation</keyword>
<accession>P00338</accession>
<accession>B4DKQ2</accession>
<accession>B7Z5E3</accession>
<accession>D3DQY3</accession>
<accession>F8W819</accession>
<accession>Q53G53</accession>
<accession>Q6IBM7</accession>
<accession>Q6ZNV1</accession>
<accession>Q9UDE8</accession>
<accession>Q9UDE9</accession>